<evidence type="ECO:0000255" key="1">
    <source>
        <dbReference type="HAMAP-Rule" id="MF_00125"/>
    </source>
</evidence>
<keyword id="KW-0028">Amino-acid biosynthesis</keyword>
<keyword id="KW-0963">Cytoplasm</keyword>
<keyword id="KW-0368">Histidine biosynthesis</keyword>
<organism>
    <name type="scientific">Prochlorococcus marinus (strain MIT 9303)</name>
    <dbReference type="NCBI Taxonomy" id="59922"/>
    <lineage>
        <taxon>Bacteria</taxon>
        <taxon>Bacillati</taxon>
        <taxon>Cyanobacteriota</taxon>
        <taxon>Cyanophyceae</taxon>
        <taxon>Synechococcales</taxon>
        <taxon>Prochlorococcaceae</taxon>
        <taxon>Prochlorococcus</taxon>
    </lineage>
</organism>
<name>HISZ_PROM3</name>
<dbReference type="EMBL" id="CP000554">
    <property type="protein sequence ID" value="ABM78267.1"/>
    <property type="molecule type" value="Genomic_DNA"/>
</dbReference>
<dbReference type="RefSeq" id="WP_011826160.1">
    <property type="nucleotide sequence ID" value="NC_008820.1"/>
</dbReference>
<dbReference type="SMR" id="A2C9V7"/>
<dbReference type="STRING" id="59922.P9303_15231"/>
<dbReference type="KEGG" id="pmf:P9303_15231"/>
<dbReference type="HOGENOM" id="CLU_025113_0_2_3"/>
<dbReference type="BioCyc" id="PMAR59922:G1G80-1321-MONOMER"/>
<dbReference type="UniPathway" id="UPA00031">
    <property type="reaction ID" value="UER00006"/>
</dbReference>
<dbReference type="Proteomes" id="UP000002274">
    <property type="component" value="Chromosome"/>
</dbReference>
<dbReference type="GO" id="GO:0005737">
    <property type="term" value="C:cytoplasm"/>
    <property type="evidence" value="ECO:0007669"/>
    <property type="project" value="UniProtKB-SubCell"/>
</dbReference>
<dbReference type="GO" id="GO:0004821">
    <property type="term" value="F:histidine-tRNA ligase activity"/>
    <property type="evidence" value="ECO:0007669"/>
    <property type="project" value="TreeGrafter"/>
</dbReference>
<dbReference type="GO" id="GO:0006427">
    <property type="term" value="P:histidyl-tRNA aminoacylation"/>
    <property type="evidence" value="ECO:0007669"/>
    <property type="project" value="TreeGrafter"/>
</dbReference>
<dbReference type="GO" id="GO:0000105">
    <property type="term" value="P:L-histidine biosynthetic process"/>
    <property type="evidence" value="ECO:0007669"/>
    <property type="project" value="UniProtKB-UniRule"/>
</dbReference>
<dbReference type="Gene3D" id="3.30.930.10">
    <property type="entry name" value="Bira Bifunctional Protein, Domain 2"/>
    <property type="match status" value="1"/>
</dbReference>
<dbReference type="HAMAP" id="MF_00125">
    <property type="entry name" value="HisZ"/>
    <property type="match status" value="1"/>
</dbReference>
<dbReference type="InterPro" id="IPR006195">
    <property type="entry name" value="aa-tRNA-synth_II"/>
</dbReference>
<dbReference type="InterPro" id="IPR045864">
    <property type="entry name" value="aa-tRNA-synth_II/BPL/LPL"/>
</dbReference>
<dbReference type="InterPro" id="IPR041715">
    <property type="entry name" value="HisRS-like_core"/>
</dbReference>
<dbReference type="InterPro" id="IPR004516">
    <property type="entry name" value="HisRS/HisZ"/>
</dbReference>
<dbReference type="InterPro" id="IPR004517">
    <property type="entry name" value="HisZ"/>
</dbReference>
<dbReference type="NCBIfam" id="NF008939">
    <property type="entry name" value="PRK12292.2-1"/>
    <property type="match status" value="1"/>
</dbReference>
<dbReference type="PANTHER" id="PTHR43707:SF1">
    <property type="entry name" value="HISTIDINE--TRNA LIGASE, MITOCHONDRIAL-RELATED"/>
    <property type="match status" value="1"/>
</dbReference>
<dbReference type="PANTHER" id="PTHR43707">
    <property type="entry name" value="HISTIDYL-TRNA SYNTHETASE"/>
    <property type="match status" value="1"/>
</dbReference>
<dbReference type="Pfam" id="PF13393">
    <property type="entry name" value="tRNA-synt_His"/>
    <property type="match status" value="1"/>
</dbReference>
<dbReference type="PIRSF" id="PIRSF001549">
    <property type="entry name" value="His-tRNA_synth"/>
    <property type="match status" value="1"/>
</dbReference>
<dbReference type="SUPFAM" id="SSF55681">
    <property type="entry name" value="Class II aaRS and biotin synthetases"/>
    <property type="match status" value="1"/>
</dbReference>
<dbReference type="PROSITE" id="PS50862">
    <property type="entry name" value="AA_TRNA_LIGASE_II"/>
    <property type="match status" value="1"/>
</dbReference>
<gene>
    <name evidence="1" type="primary">hisZ</name>
    <name type="ordered locus">P9303_15231</name>
</gene>
<protein>
    <recommendedName>
        <fullName evidence="1">ATP phosphoribosyltransferase regulatory subunit</fullName>
    </recommendedName>
</protein>
<reference key="1">
    <citation type="journal article" date="2007" name="PLoS Genet.">
        <title>Patterns and implications of gene gain and loss in the evolution of Prochlorococcus.</title>
        <authorList>
            <person name="Kettler G.C."/>
            <person name="Martiny A.C."/>
            <person name="Huang K."/>
            <person name="Zucker J."/>
            <person name="Coleman M.L."/>
            <person name="Rodrigue S."/>
            <person name="Chen F."/>
            <person name="Lapidus A."/>
            <person name="Ferriera S."/>
            <person name="Johnson J."/>
            <person name="Steglich C."/>
            <person name="Church G.M."/>
            <person name="Richardson P."/>
            <person name="Chisholm S.W."/>
        </authorList>
    </citation>
    <scope>NUCLEOTIDE SEQUENCE [LARGE SCALE GENOMIC DNA]</scope>
    <source>
        <strain>MIT 9303</strain>
    </source>
</reference>
<feature type="chain" id="PRO_1000016274" description="ATP phosphoribosyltransferase regulatory subunit">
    <location>
        <begin position="1"/>
        <end position="392"/>
    </location>
</feature>
<accession>A2C9V7</accession>
<sequence length="392" mass="43904">MALQPAAGARDLNPQQVELNQKLSQRLAEVYRLWGYDEVSPPRVERLETLKAGGAIASQDIVRLVADEPLGLRPEMTASIARAACTRLRQRPRPLRLWAAGTIFESRTADEGSLCIEENLQSGVELFGVEPINAEMELLSLLFSAVETLELSKQHQPRLLVGHTALMDLIMLPFQNDLREKIRTALIHYDRLALENLQLPNDQFERLLHHLECRGEPLDVLERLSGLFGTQQALNNLQRLFEQMGPLAADQGIDLQLDPTFQPHFELYTGLVFQLVCQSDAAPVVIARGGRYDNLVARCGAKGLQAAGVGFSFAIDDIRELLTKEIKASEAVESTLVAYGDQATLEHALKRQRHWHKQGQRAVVELEACHDREEAFSRLADRGCSTLDWLDH</sequence>
<proteinExistence type="inferred from homology"/>
<comment type="function">
    <text evidence="1">Required for the first step of histidine biosynthesis. May allow the feedback regulation of ATP phosphoribosyltransferase activity by histidine.</text>
</comment>
<comment type="pathway">
    <text evidence="1">Amino-acid biosynthesis; L-histidine biosynthesis; L-histidine from 5-phospho-alpha-D-ribose 1-diphosphate: step 1/9.</text>
</comment>
<comment type="subunit">
    <text evidence="1">Heteromultimer composed of HisG and HisZ subunits.</text>
</comment>
<comment type="subcellular location">
    <subcellularLocation>
        <location evidence="1">Cytoplasm</location>
    </subcellularLocation>
</comment>
<comment type="miscellaneous">
    <text>This function is generally fulfilled by the C-terminal part of HisG, which is missing in some bacteria such as this one.</text>
</comment>
<comment type="similarity">
    <text evidence="1">Belongs to the class-II aminoacyl-tRNA synthetase family. HisZ subfamily.</text>
</comment>